<name>SCDA_STAAR</name>
<feature type="chain" id="PRO_0000220338" description="Iron-sulfur cluster repair protein ScdA">
    <location>
        <begin position="1"/>
        <end position="224"/>
    </location>
</feature>
<accession>Q6GK53</accession>
<comment type="function">
    <text evidence="1">Di-iron-containing protein involved in the repair of iron-sulfur clusters damaged by oxidative and nitrosative stress conditions.</text>
</comment>
<comment type="subunit">
    <text evidence="1">Homodimer.</text>
</comment>
<comment type="subcellular location">
    <subcellularLocation>
        <location evidence="1">Cytoplasm</location>
    </subcellularLocation>
</comment>
<comment type="similarity">
    <text evidence="1">Belongs to the RIC family. ScdA subfamily.</text>
</comment>
<reference key="1">
    <citation type="journal article" date="2004" name="Proc. Natl. Acad. Sci. U.S.A.">
        <title>Complete genomes of two clinical Staphylococcus aureus strains: evidence for the rapid evolution of virulence and drug resistance.</title>
        <authorList>
            <person name="Holden M.T.G."/>
            <person name="Feil E.J."/>
            <person name="Lindsay J.A."/>
            <person name="Peacock S.J."/>
            <person name="Day N.P.J."/>
            <person name="Enright M.C."/>
            <person name="Foster T.J."/>
            <person name="Moore C.E."/>
            <person name="Hurst L."/>
            <person name="Atkin R."/>
            <person name="Barron A."/>
            <person name="Bason N."/>
            <person name="Bentley S.D."/>
            <person name="Chillingworth C."/>
            <person name="Chillingworth T."/>
            <person name="Churcher C."/>
            <person name="Clark L."/>
            <person name="Corton C."/>
            <person name="Cronin A."/>
            <person name="Doggett J."/>
            <person name="Dowd L."/>
            <person name="Feltwell T."/>
            <person name="Hance Z."/>
            <person name="Harris B."/>
            <person name="Hauser H."/>
            <person name="Holroyd S."/>
            <person name="Jagels K."/>
            <person name="James K.D."/>
            <person name="Lennard N."/>
            <person name="Line A."/>
            <person name="Mayes R."/>
            <person name="Moule S."/>
            <person name="Mungall K."/>
            <person name="Ormond D."/>
            <person name="Quail M.A."/>
            <person name="Rabbinowitsch E."/>
            <person name="Rutherford K.M."/>
            <person name="Sanders M."/>
            <person name="Sharp S."/>
            <person name="Simmonds M."/>
            <person name="Stevens K."/>
            <person name="Whitehead S."/>
            <person name="Barrell B.G."/>
            <person name="Spratt B.G."/>
            <person name="Parkhill J."/>
        </authorList>
    </citation>
    <scope>NUCLEOTIDE SEQUENCE [LARGE SCALE GENOMIC DNA]</scope>
    <source>
        <strain>MRSA252</strain>
    </source>
</reference>
<proteinExistence type="inferred from homology"/>
<gene>
    <name evidence="1" type="primary">scdA</name>
    <name type="ordered locus">SAR0256</name>
</gene>
<protein>
    <recommendedName>
        <fullName evidence="1">Iron-sulfur cluster repair protein ScdA</fullName>
    </recommendedName>
</protein>
<organism>
    <name type="scientific">Staphylococcus aureus (strain MRSA252)</name>
    <dbReference type="NCBI Taxonomy" id="282458"/>
    <lineage>
        <taxon>Bacteria</taxon>
        <taxon>Bacillati</taxon>
        <taxon>Bacillota</taxon>
        <taxon>Bacilli</taxon>
        <taxon>Bacillales</taxon>
        <taxon>Staphylococcaceae</taxon>
        <taxon>Staphylococcus</taxon>
    </lineage>
</organism>
<sequence length="224" mass="25514">MINKNDIVADVVTDYPKAADIFRSVGIDFCCGGQVSIEAASLEKKNVDLNELLQRLNEVEQTNTPGSLNPKFLNVSSLIQYIQSAYHEPLREEFKNLTPYVTKLSKVHGPNHPYLVELKETYDTFKNGMLEHMQKEDDVDFPKLIKYEQGEVVDDINTVIDDLVSDHIATGQLLVKMSELTSSYEPPIEACGTWRLVYQRLKALEVLTHEHVHLENHVLFKKVS</sequence>
<dbReference type="EMBL" id="BX571856">
    <property type="protein sequence ID" value="CAG39282.1"/>
    <property type="molecule type" value="Genomic_DNA"/>
</dbReference>
<dbReference type="RefSeq" id="WP_000608835.1">
    <property type="nucleotide sequence ID" value="NC_002952.2"/>
</dbReference>
<dbReference type="SMR" id="Q6GK53"/>
<dbReference type="KEGG" id="sar:SAR0256"/>
<dbReference type="HOGENOM" id="CLU_076075_0_1_9"/>
<dbReference type="Proteomes" id="UP000000596">
    <property type="component" value="Chromosome"/>
</dbReference>
<dbReference type="GO" id="GO:0005737">
    <property type="term" value="C:cytoplasm"/>
    <property type="evidence" value="ECO:0007669"/>
    <property type="project" value="UniProtKB-SubCell"/>
</dbReference>
<dbReference type="GO" id="GO:0046872">
    <property type="term" value="F:metal ion binding"/>
    <property type="evidence" value="ECO:0007669"/>
    <property type="project" value="UniProtKB-KW"/>
</dbReference>
<dbReference type="GO" id="GO:0030091">
    <property type="term" value="P:protein repair"/>
    <property type="evidence" value="ECO:0007669"/>
    <property type="project" value="UniProtKB-UniRule"/>
</dbReference>
<dbReference type="GO" id="GO:0051409">
    <property type="term" value="P:response to nitrosative stress"/>
    <property type="evidence" value="ECO:0007669"/>
    <property type="project" value="UniProtKB-UniRule"/>
</dbReference>
<dbReference type="GO" id="GO:0006979">
    <property type="term" value="P:response to oxidative stress"/>
    <property type="evidence" value="ECO:0007669"/>
    <property type="project" value="UniProtKB-UniRule"/>
</dbReference>
<dbReference type="FunFam" id="1.20.120.520:FF:000003">
    <property type="entry name" value="Iron-sulfur cluster repair protein ScdA"/>
    <property type="match status" value="1"/>
</dbReference>
<dbReference type="Gene3D" id="1.20.120.520">
    <property type="entry name" value="nmb1532 protein domain like"/>
    <property type="match status" value="1"/>
</dbReference>
<dbReference type="Gene3D" id="1.10.3910.10">
    <property type="entry name" value="SP0561-like"/>
    <property type="match status" value="1"/>
</dbReference>
<dbReference type="HAMAP" id="MF_01156">
    <property type="entry name" value="RIC_ScdA"/>
    <property type="match status" value="1"/>
</dbReference>
<dbReference type="InterPro" id="IPR012312">
    <property type="entry name" value="Hemerythrin-like"/>
</dbReference>
<dbReference type="InterPro" id="IPR019903">
    <property type="entry name" value="RIC_family"/>
</dbReference>
<dbReference type="InterPro" id="IPR023551">
    <property type="entry name" value="ScdA"/>
</dbReference>
<dbReference type="InterPro" id="IPR038062">
    <property type="entry name" value="ScdA-like_N_sf"/>
</dbReference>
<dbReference type="NCBIfam" id="TIGR03652">
    <property type="entry name" value="FeS_repair_RIC"/>
    <property type="match status" value="1"/>
</dbReference>
<dbReference type="NCBIfam" id="NF009777">
    <property type="entry name" value="PRK13276.1"/>
    <property type="match status" value="1"/>
</dbReference>
<dbReference type="PANTHER" id="PTHR36438">
    <property type="entry name" value="IRON-SULFUR CLUSTER REPAIR PROTEIN YTFE"/>
    <property type="match status" value="1"/>
</dbReference>
<dbReference type="PANTHER" id="PTHR36438:SF1">
    <property type="entry name" value="IRON-SULFUR CLUSTER REPAIR PROTEIN YTFE"/>
    <property type="match status" value="1"/>
</dbReference>
<dbReference type="Pfam" id="PF01814">
    <property type="entry name" value="Hemerythrin"/>
    <property type="match status" value="1"/>
</dbReference>
<dbReference type="Pfam" id="PF04405">
    <property type="entry name" value="ScdA_N"/>
    <property type="match status" value="1"/>
</dbReference>
<dbReference type="SUPFAM" id="SSF140683">
    <property type="entry name" value="SP0561-like"/>
    <property type="match status" value="1"/>
</dbReference>
<evidence type="ECO:0000255" key="1">
    <source>
        <dbReference type="HAMAP-Rule" id="MF_01156"/>
    </source>
</evidence>
<keyword id="KW-0963">Cytoplasm</keyword>
<keyword id="KW-0408">Iron</keyword>
<keyword id="KW-0479">Metal-binding</keyword>
<keyword id="KW-0346">Stress response</keyword>